<organism>
    <name type="scientific">Arabidopsis thaliana</name>
    <name type="common">Mouse-ear cress</name>
    <dbReference type="NCBI Taxonomy" id="3702"/>
    <lineage>
        <taxon>Eukaryota</taxon>
        <taxon>Viridiplantae</taxon>
        <taxon>Streptophyta</taxon>
        <taxon>Embryophyta</taxon>
        <taxon>Tracheophyta</taxon>
        <taxon>Spermatophyta</taxon>
        <taxon>Magnoliopsida</taxon>
        <taxon>eudicotyledons</taxon>
        <taxon>Gunneridae</taxon>
        <taxon>Pentapetalae</taxon>
        <taxon>rosids</taxon>
        <taxon>malvids</taxon>
        <taxon>Brassicales</taxon>
        <taxon>Brassicaceae</taxon>
        <taxon>Camelineae</taxon>
        <taxon>Arabidopsis</taxon>
    </lineage>
</organism>
<evidence type="ECO:0000255" key="1">
    <source>
        <dbReference type="PROSITE-ProRule" id="PRU00215"/>
    </source>
</evidence>
<evidence type="ECO:0000256" key="2">
    <source>
        <dbReference type="SAM" id="MobiDB-lite"/>
    </source>
</evidence>
<evidence type="ECO:0000303" key="3">
    <source ref="6"/>
</evidence>
<evidence type="ECO:0000305" key="4"/>
<evidence type="ECO:0000312" key="5">
    <source>
        <dbReference type="Araport" id="AT3G23605"/>
    </source>
</evidence>
<evidence type="ECO:0000312" key="6">
    <source>
        <dbReference type="EMBL" id="BAB02779.1"/>
    </source>
</evidence>
<proteinExistence type="evidence at transcript level"/>
<protein>
    <recommendedName>
        <fullName evidence="3">Plant UBX domain-containing protein 12</fullName>
        <shortName evidence="3">PUX12</shortName>
    </recommendedName>
</protein>
<reference key="1">
    <citation type="journal article" date="2000" name="DNA Res.">
        <title>Structural analysis of Arabidopsis thaliana chromosome 3. I. Sequence features of the regions of 4,504,864 bp covered by sixty P1 and TAC clones.</title>
        <authorList>
            <person name="Sato S."/>
            <person name="Nakamura Y."/>
            <person name="Kaneko T."/>
            <person name="Katoh T."/>
            <person name="Asamizu E."/>
            <person name="Tabata S."/>
        </authorList>
    </citation>
    <scope>NUCLEOTIDE SEQUENCE [LARGE SCALE GENOMIC DNA]</scope>
    <source>
        <strain>cv. Columbia</strain>
    </source>
</reference>
<reference key="2">
    <citation type="journal article" date="2017" name="Plant J.">
        <title>Araport11: a complete reannotation of the Arabidopsis thaliana reference genome.</title>
        <authorList>
            <person name="Cheng C.Y."/>
            <person name="Krishnakumar V."/>
            <person name="Chan A.P."/>
            <person name="Thibaud-Nissen F."/>
            <person name="Schobel S."/>
            <person name="Town C.D."/>
        </authorList>
    </citation>
    <scope>GENOME REANNOTATION</scope>
    <source>
        <strain>cv. Columbia</strain>
    </source>
</reference>
<reference key="3">
    <citation type="submission" date="2005-03" db="EMBL/GenBank/DDBJ databases">
        <title>Large-scale analysis of RIKEN Arabidopsis full-length (RAFL) cDNAs.</title>
        <authorList>
            <person name="Totoki Y."/>
            <person name="Seki M."/>
            <person name="Ishida J."/>
            <person name="Nakajima M."/>
            <person name="Enju A."/>
            <person name="Kamiya A."/>
            <person name="Narusaka M."/>
            <person name="Shin-i T."/>
            <person name="Nakagawa M."/>
            <person name="Sakamoto N."/>
            <person name="Oishi K."/>
            <person name="Kohara Y."/>
            <person name="Kobayashi M."/>
            <person name="Toyoda A."/>
            <person name="Sakaki Y."/>
            <person name="Sakurai T."/>
            <person name="Iida K."/>
            <person name="Akiyama K."/>
            <person name="Satou M."/>
            <person name="Toyoda T."/>
            <person name="Konagaya A."/>
            <person name="Carninci P."/>
            <person name="Kawai J."/>
            <person name="Hayashizaki Y."/>
            <person name="Shinozaki K."/>
        </authorList>
    </citation>
    <scope>NUCLEOTIDE SEQUENCE [LARGE SCALE MRNA]</scope>
    <source>
        <strain>cv. Columbia</strain>
    </source>
</reference>
<reference key="4">
    <citation type="submission" date="2006-05" db="EMBL/GenBank/DDBJ databases">
        <title>Arabidopsis ORF clones.</title>
        <authorList>
            <person name="Quinitio C."/>
            <person name="Chen H."/>
            <person name="Kim C.J."/>
            <person name="Shinn P."/>
            <person name="Ecker J.R."/>
        </authorList>
    </citation>
    <scope>NUCLEOTIDE SEQUENCE [LARGE SCALE MRNA]</scope>
    <source>
        <strain>cv. Columbia</strain>
    </source>
</reference>
<reference key="5">
    <citation type="submission" date="2002-03" db="EMBL/GenBank/DDBJ databases">
        <title>Full-length cDNA from Arabidopsis thaliana.</title>
        <authorList>
            <person name="Brover V.V."/>
            <person name="Troukhan M.E."/>
            <person name="Alexandrov N.A."/>
            <person name="Lu Y.-P."/>
            <person name="Flavell R.B."/>
            <person name="Feldmann K.A."/>
        </authorList>
    </citation>
    <scope>NUCLEOTIDE SEQUENCE [LARGE SCALE MRNA]</scope>
</reference>
<reference key="6">
    <citation type="book" date="2005" name="Proceedings of the 16th international conference on Arabidopsis research">
        <title>The plant UBX-domain containing (PUX) protein family regulates the function of Arabidopsis CDC48, a conserved essential AAA-ATPase.</title>
        <authorList>
            <person name="Posthuma R."/>
            <person name="Rancour D."/>
            <person name="Park S."/>
            <person name="Bates B."/>
            <person name="Bednarek S."/>
        </authorList>
    </citation>
    <scope>GENE FAMILY</scope>
</reference>
<comment type="sequence caution" evidence="4">
    <conflict type="erroneous initiation">
        <sequence resource="EMBL-CDS" id="AAM66019"/>
    </conflict>
    <text>Truncated N-terminus.</text>
</comment>
<sequence>MLECQSMMEKLSPFVDVASLEIESLRRIKRPKRFSEEESEETENTTNSSNAVFGFPNLPEEPNRDMDQSVLCRICVRLPDGRRIQRSFLKSESVQLLWSFCYSQIGDESSERKRRFKLIQGFPGDYKNLYFGSNTTFEQSGLANSLVSVTWL</sequence>
<dbReference type="EMBL" id="AB023036">
    <property type="protein sequence ID" value="BAB02779.1"/>
    <property type="molecule type" value="Genomic_DNA"/>
</dbReference>
<dbReference type="EMBL" id="CP002686">
    <property type="protein sequence ID" value="AEE76783.1"/>
    <property type="molecule type" value="Genomic_DNA"/>
</dbReference>
<dbReference type="EMBL" id="AK221143">
    <property type="protein sequence ID" value="BAD95135.1"/>
    <property type="molecule type" value="mRNA"/>
</dbReference>
<dbReference type="EMBL" id="BT025611">
    <property type="protein sequence ID" value="ABF59029.1"/>
    <property type="molecule type" value="mRNA"/>
</dbReference>
<dbReference type="EMBL" id="AY088483">
    <property type="protein sequence ID" value="AAM66019.1"/>
    <property type="status" value="ALT_INIT"/>
    <property type="molecule type" value="mRNA"/>
</dbReference>
<dbReference type="RefSeq" id="NP_566733.1">
    <property type="nucleotide sequence ID" value="NM_113264.4"/>
</dbReference>
<dbReference type="SMR" id="Q9LUG7"/>
<dbReference type="FunCoup" id="Q9LUG7">
    <property type="interactions" value="26"/>
</dbReference>
<dbReference type="STRING" id="3702.Q9LUG7"/>
<dbReference type="TCDB" id="3.A.16.1.5">
    <property type="family name" value="the endoplasmic reticular retrotranslocon (er-rt) family"/>
</dbReference>
<dbReference type="PaxDb" id="3702-AT3G23605.1"/>
<dbReference type="ProteomicsDB" id="224817"/>
<dbReference type="EnsemblPlants" id="AT3G23605.1">
    <property type="protein sequence ID" value="AT3G23605.1"/>
    <property type="gene ID" value="AT3G23605"/>
</dbReference>
<dbReference type="GeneID" id="821940"/>
<dbReference type="Gramene" id="AT3G23605.1">
    <property type="protein sequence ID" value="AT3G23605.1"/>
    <property type="gene ID" value="AT3G23605"/>
</dbReference>
<dbReference type="KEGG" id="ath:AT3G23605"/>
<dbReference type="Araport" id="AT3G23605"/>
<dbReference type="TAIR" id="AT3G23605"/>
<dbReference type="eggNOG" id="KOG1364">
    <property type="taxonomic scope" value="Eukaryota"/>
</dbReference>
<dbReference type="HOGENOM" id="CLU_1724805_0_0_1"/>
<dbReference type="InParanoid" id="Q9LUG7"/>
<dbReference type="OMA" id="TMLECQS"/>
<dbReference type="PhylomeDB" id="Q9LUG7"/>
<dbReference type="PRO" id="PR:Q9LUG7"/>
<dbReference type="Proteomes" id="UP000006548">
    <property type="component" value="Chromosome 3"/>
</dbReference>
<dbReference type="ExpressionAtlas" id="Q9LUG7">
    <property type="expression patterns" value="baseline and differential"/>
</dbReference>
<dbReference type="CDD" id="cd01767">
    <property type="entry name" value="UBX"/>
    <property type="match status" value="1"/>
</dbReference>
<dbReference type="Gene3D" id="3.10.20.90">
    <property type="entry name" value="Phosphatidylinositol 3-kinase Catalytic Subunit, Chain A, domain 1"/>
    <property type="match status" value="1"/>
</dbReference>
<dbReference type="InterPro" id="IPR029071">
    <property type="entry name" value="Ubiquitin-like_domsf"/>
</dbReference>
<dbReference type="InterPro" id="IPR001012">
    <property type="entry name" value="UBX_dom"/>
</dbReference>
<dbReference type="InterPro" id="IPR050730">
    <property type="entry name" value="UBX_domain-protein"/>
</dbReference>
<dbReference type="PANTHER" id="PTHR23322">
    <property type="entry name" value="FAS-ASSOCIATED PROTEIN"/>
    <property type="match status" value="1"/>
</dbReference>
<dbReference type="PANTHER" id="PTHR23322:SF78">
    <property type="entry name" value="PLANT UBX DOMAIN-CONTAINING PROTEIN 16-RELATED"/>
    <property type="match status" value="1"/>
</dbReference>
<dbReference type="Pfam" id="PF00789">
    <property type="entry name" value="UBX"/>
    <property type="match status" value="1"/>
</dbReference>
<dbReference type="SUPFAM" id="SSF54236">
    <property type="entry name" value="Ubiquitin-like"/>
    <property type="match status" value="1"/>
</dbReference>
<dbReference type="PROSITE" id="PS50033">
    <property type="entry name" value="UBX"/>
    <property type="match status" value="1"/>
</dbReference>
<keyword id="KW-1185">Reference proteome</keyword>
<keyword id="KW-0833">Ubl conjugation pathway</keyword>
<feature type="chain" id="PRO_0000432610" description="Plant UBX domain-containing protein 12">
    <location>
        <begin position="1"/>
        <end position="152"/>
    </location>
</feature>
<feature type="domain" description="UBX" evidence="1">
    <location>
        <begin position="67"/>
        <end position="150"/>
    </location>
</feature>
<feature type="region of interest" description="Disordered" evidence="2">
    <location>
        <begin position="32"/>
        <end position="61"/>
    </location>
</feature>
<feature type="sequence conflict" description="In Ref. 5; AAM66019." evidence="4" ref="5">
    <original>V</original>
    <variation>I</variation>
    <location>
        <position position="17"/>
    </location>
</feature>
<gene>
    <name evidence="3" type="primary">PUX12</name>
    <name evidence="5" type="ordered locus">At3g23605</name>
    <name evidence="6" type="ORF">MDB19.9</name>
</gene>
<accession>Q9LUG7</accession>
<accession>Q8L9E1</accession>
<name>PUX12_ARATH</name>